<organism>
    <name type="scientific">Salmonella paratyphi A (strain ATCC 9150 / SARB42)</name>
    <dbReference type="NCBI Taxonomy" id="295319"/>
    <lineage>
        <taxon>Bacteria</taxon>
        <taxon>Pseudomonadati</taxon>
        <taxon>Pseudomonadota</taxon>
        <taxon>Gammaproteobacteria</taxon>
        <taxon>Enterobacterales</taxon>
        <taxon>Enterobacteriaceae</taxon>
        <taxon>Salmonella</taxon>
    </lineage>
</organism>
<keyword id="KW-0106">Calcium</keyword>
<keyword id="KW-0998">Cell outer membrane</keyword>
<keyword id="KW-0406">Ion transport</keyword>
<keyword id="KW-0472">Membrane</keyword>
<keyword id="KW-0479">Metal-binding</keyword>
<keyword id="KW-0626">Porin</keyword>
<keyword id="KW-0732">Signal</keyword>
<keyword id="KW-0798">TonB box</keyword>
<keyword id="KW-0812">Transmembrane</keyword>
<keyword id="KW-1134">Transmembrane beta strand</keyword>
<keyword id="KW-0813">Transport</keyword>
<accession>Q5PK67</accession>
<name>BTUB_SALPA</name>
<sequence>MIKKATLLTAFSVTAFSAWAQDTSPDTLVVTANRFQQPRSAVLAPVTIVTRQDIERWQSTSVNDVLRRLPGVDIAQSGGAGQNSSIFIRGTNSSHVLVLIDGVRLNLAGVSGSADLSQFPVSLVQRIEYIRGPRSAIYGSDAIGGVVNIITTRDNPGTELTAGWGSNSYQNYDISTQQQLGENTRATLIGDYEYTKGFDVVAKGGTGMQAQPDRDGFLSKTLYGALEHTFSDRWSGFVRGYGYDNRTDYDAYYSPGSPLIDTRKLYSQSWDAGLRFNGERIQSQLVSSYSHSKDYNYDPHYGRYDTSATLDEMKQYNVQWTNSVVVGHGNVGAGVDWQKQTTTPGTGYVPEGYDQRNTGVYLTGLQQLGDFTLEAAARSDDNSQFGRHGTWQTSAGWEFIEGYRFIASYGTSYKAPNLGQLYGYYGNPNLNPEKSKQWEGAFEGLTAGVSWRISGYRNDINDMIDYDDHLQKYYNEGKARIKGIEATANFDTGPLTHTVSYDYVDARNAITDTPLPRRSKQMAKYQLDWDVYDFDWGVTYQYLGSRYDSDYSAYPYRTVKMGGVSLWDLTVAYPVTSHLTVRGKIANLFDKDYETVYGYQTAGREYTLSGSYTF</sequence>
<reference key="1">
    <citation type="journal article" date="2004" name="Nat. Genet.">
        <title>Comparison of genome degradation in Paratyphi A and Typhi, human-restricted serovars of Salmonella enterica that cause typhoid.</title>
        <authorList>
            <person name="McClelland M."/>
            <person name="Sanderson K.E."/>
            <person name="Clifton S.W."/>
            <person name="Latreille P."/>
            <person name="Porwollik S."/>
            <person name="Sabo A."/>
            <person name="Meyer R."/>
            <person name="Bieri T."/>
            <person name="Ozersky P."/>
            <person name="McLellan M."/>
            <person name="Harkins C.R."/>
            <person name="Wang C."/>
            <person name="Nguyen C."/>
            <person name="Berghoff A."/>
            <person name="Elliott G."/>
            <person name="Kohlberg S."/>
            <person name="Strong C."/>
            <person name="Du F."/>
            <person name="Carter J."/>
            <person name="Kremizki C."/>
            <person name="Layman D."/>
            <person name="Leonard S."/>
            <person name="Sun H."/>
            <person name="Fulton L."/>
            <person name="Nash W."/>
            <person name="Miner T."/>
            <person name="Minx P."/>
            <person name="Delehaunty K."/>
            <person name="Fronick C."/>
            <person name="Magrini V."/>
            <person name="Nhan M."/>
            <person name="Warren W."/>
            <person name="Florea L."/>
            <person name="Spieth J."/>
            <person name="Wilson R.K."/>
        </authorList>
    </citation>
    <scope>NUCLEOTIDE SEQUENCE [LARGE SCALE GENOMIC DNA]</scope>
    <source>
        <strain>ATCC 9150 / SARB42</strain>
    </source>
</reference>
<comment type="function">
    <text evidence="1">Involved in the active translocation of vitamin B12 (cyanocobalamin) across the outer membrane to the periplasmic space. It derives its energy for transport by interacting with the trans-periplasmic membrane protein TonB.</text>
</comment>
<comment type="subcellular location">
    <subcellularLocation>
        <location evidence="1">Cell outer membrane</location>
        <topology evidence="1">Multi-pass membrane protein</topology>
    </subcellularLocation>
</comment>
<comment type="similarity">
    <text evidence="1">Belongs to the TonB-dependent receptor family. BtuB (TC 1.B.14.3.1) subfamily.</text>
</comment>
<gene>
    <name evidence="1" type="primary">btuB</name>
    <name type="ordered locus">SPA3968</name>
</gene>
<protein>
    <recommendedName>
        <fullName evidence="1">Vitamin B12 transporter BtuB</fullName>
    </recommendedName>
    <alternativeName>
        <fullName evidence="1">Cobalamin receptor</fullName>
    </alternativeName>
    <alternativeName>
        <fullName evidence="1">Outer membrane cobalamin translocator</fullName>
    </alternativeName>
</protein>
<evidence type="ECO:0000255" key="1">
    <source>
        <dbReference type="HAMAP-Rule" id="MF_01531"/>
    </source>
</evidence>
<evidence type="ECO:0000255" key="2">
    <source>
        <dbReference type="PROSITE-ProRule" id="PRU01360"/>
    </source>
</evidence>
<feature type="signal peptide" evidence="1">
    <location>
        <begin position="1"/>
        <end position="20"/>
    </location>
</feature>
<feature type="chain" id="PRO_0000003487" description="Vitamin B12 transporter BtuB">
    <location>
        <begin position="21"/>
        <end position="614"/>
    </location>
</feature>
<feature type="transmembrane region" description="Beta stranded" evidence="1">
    <location>
        <begin position="158"/>
        <end position="165"/>
    </location>
</feature>
<feature type="transmembrane region" description="Beta stranded" evidence="1">
    <location>
        <begin position="169"/>
        <end position="178"/>
    </location>
</feature>
<feature type="transmembrane region" description="Beta stranded" evidence="1">
    <location>
        <begin position="184"/>
        <end position="195"/>
    </location>
</feature>
<feature type="transmembrane region" description="Beta stranded" evidence="1">
    <location>
        <begin position="217"/>
        <end position="227"/>
    </location>
</feature>
<feature type="transmembrane region" description="Beta stranded" evidence="1">
    <location>
        <begin position="232"/>
        <end position="248"/>
    </location>
</feature>
<feature type="transmembrane region" description="Beta stranded" evidence="1">
    <location>
        <begin position="263"/>
        <end position="277"/>
    </location>
</feature>
<feature type="transmembrane region" description="Beta stranded" evidence="1">
    <location>
        <begin position="279"/>
        <end position="296"/>
    </location>
</feature>
<feature type="transmembrane region" description="Beta stranded" evidence="1">
    <location>
        <begin position="309"/>
        <end position="325"/>
    </location>
</feature>
<feature type="transmembrane region" description="Beta stranded" evidence="1">
    <location>
        <begin position="328"/>
        <end position="337"/>
    </location>
</feature>
<feature type="transmembrane region" description="Beta stranded" evidence="1">
    <location>
        <begin position="353"/>
        <end position="369"/>
    </location>
</feature>
<feature type="transmembrane region" description="Beta stranded" evidence="1">
    <location>
        <begin position="371"/>
        <end position="381"/>
    </location>
</feature>
<feature type="transmembrane region" description="Beta stranded" evidence="1">
    <location>
        <begin position="385"/>
        <end position="400"/>
    </location>
</feature>
<feature type="transmembrane region" description="Beta stranded" evidence="1">
    <location>
        <begin position="403"/>
        <end position="417"/>
    </location>
</feature>
<feature type="transmembrane region" description="Beta stranded" evidence="1">
    <location>
        <begin position="434"/>
        <end position="443"/>
    </location>
</feature>
<feature type="transmembrane region" description="Beta stranded" evidence="1">
    <location>
        <begin position="449"/>
        <end position="458"/>
    </location>
</feature>
<feature type="transmembrane region" description="Beta stranded" evidence="1">
    <location>
        <begin position="473"/>
        <end position="490"/>
    </location>
</feature>
<feature type="transmembrane region" description="Beta stranded" evidence="1">
    <location>
        <begin position="494"/>
        <end position="509"/>
    </location>
</feature>
<feature type="transmembrane region" description="Beta stranded" evidence="1">
    <location>
        <begin position="517"/>
        <end position="529"/>
    </location>
</feature>
<feature type="transmembrane region" description="Beta stranded" evidence="1">
    <location>
        <begin position="535"/>
        <end position="550"/>
    </location>
</feature>
<feature type="transmembrane region" description="Beta stranded" evidence="1">
    <location>
        <begin position="558"/>
        <end position="572"/>
    </location>
</feature>
<feature type="transmembrane region" description="Beta stranded" evidence="1">
    <location>
        <begin position="585"/>
        <end position="596"/>
    </location>
</feature>
<feature type="transmembrane region" description="Beta stranded" evidence="1">
    <location>
        <begin position="602"/>
        <end position="614"/>
    </location>
</feature>
<feature type="domain" description="TBDR plug" evidence="2">
    <location>
        <begin position="38"/>
        <end position="152"/>
    </location>
</feature>
<feature type="domain" description="TBDR beta-barrel" evidence="2">
    <location>
        <begin position="155"/>
        <end position="614"/>
    </location>
</feature>
<feature type="short sequence motif" description="TonB box">
    <location>
        <begin position="26"/>
        <end position="33"/>
    </location>
</feature>
<feature type="short sequence motif" description="TonB C-terminal box">
    <location>
        <begin position="597"/>
        <end position="614"/>
    </location>
</feature>
<feature type="binding site" evidence="1">
    <location>
        <position position="85"/>
    </location>
    <ligand>
        <name>cyanocob(III)alamin</name>
        <dbReference type="ChEBI" id="CHEBI:17439"/>
    </ligand>
</feature>
<feature type="binding site" evidence="1">
    <location>
        <position position="92"/>
    </location>
    <ligand>
        <name>cyanocob(III)alamin</name>
        <dbReference type="ChEBI" id="CHEBI:17439"/>
    </ligand>
</feature>
<feature type="binding site" evidence="1">
    <location>
        <begin position="110"/>
        <end position="111"/>
    </location>
    <ligand>
        <name>cyanocob(III)alamin</name>
        <dbReference type="ChEBI" id="CHEBI:17439"/>
    </ligand>
</feature>
<feature type="binding site" evidence="1">
    <location>
        <position position="199"/>
    </location>
    <ligand>
        <name>Ca(2+)</name>
        <dbReference type="ChEBI" id="CHEBI:29108"/>
        <label>1</label>
    </ligand>
</feature>
<feature type="binding site" evidence="1">
    <location>
        <position position="211"/>
    </location>
    <ligand>
        <name>Ca(2+)</name>
        <dbReference type="ChEBI" id="CHEBI:29108"/>
        <label>1</label>
    </ligand>
</feature>
<feature type="binding site" evidence="1">
    <location>
        <position position="213"/>
    </location>
    <ligand>
        <name>Ca(2+)</name>
        <dbReference type="ChEBI" id="CHEBI:29108"/>
        <label>1</label>
    </ligand>
</feature>
<feature type="binding site" evidence="1">
    <location>
        <position position="213"/>
    </location>
    <ligand>
        <name>Ca(2+)</name>
        <dbReference type="ChEBI" id="CHEBI:29108"/>
        <label>2</label>
    </ligand>
</feature>
<feature type="binding site" evidence="1">
    <location>
        <position position="215"/>
    </location>
    <ligand>
        <name>Ca(2+)</name>
        <dbReference type="ChEBI" id="CHEBI:29108"/>
        <label>1</label>
    </ligand>
</feature>
<feature type="binding site" evidence="1">
    <location>
        <position position="215"/>
    </location>
    <ligand>
        <name>Ca(2+)</name>
        <dbReference type="ChEBI" id="CHEBI:29108"/>
        <label>2</label>
    </ligand>
</feature>
<feature type="binding site" evidence="1">
    <location>
        <position position="249"/>
    </location>
    <ligand>
        <name>Ca(2+)</name>
        <dbReference type="ChEBI" id="CHEBI:29108"/>
        <label>2</label>
    </ligand>
</feature>
<feature type="binding site" evidence="1">
    <location>
        <position position="250"/>
    </location>
    <ligand>
        <name>Ca(2+)</name>
        <dbReference type="ChEBI" id="CHEBI:29108"/>
        <label>1</label>
    </ligand>
</feature>
<feature type="binding site" evidence="1">
    <location>
        <position position="250"/>
    </location>
    <ligand>
        <name>Ca(2+)</name>
        <dbReference type="ChEBI" id="CHEBI:29108"/>
        <label>2</label>
    </ligand>
</feature>
<feature type="binding site" evidence="1">
    <location>
        <position position="251"/>
    </location>
    <ligand>
        <name>cyanocob(III)alamin</name>
        <dbReference type="ChEBI" id="CHEBI:17439"/>
    </ligand>
</feature>
<feature type="binding site" evidence="1">
    <location>
        <position position="261"/>
    </location>
    <ligand>
        <name>Ca(2+)</name>
        <dbReference type="ChEBI" id="CHEBI:29108"/>
        <label>2</label>
    </ligand>
</feature>
<feature type="binding site" evidence="1">
    <location>
        <position position="309"/>
    </location>
    <ligand>
        <name>cyanocob(III)alamin</name>
        <dbReference type="ChEBI" id="CHEBI:17439"/>
    </ligand>
</feature>
<feature type="binding site" evidence="1">
    <location>
        <position position="517"/>
    </location>
    <ligand>
        <name>cyanocob(III)alamin</name>
        <dbReference type="ChEBI" id="CHEBI:17439"/>
    </ligand>
</feature>
<feature type="binding site" evidence="1">
    <location>
        <position position="551"/>
    </location>
    <ligand>
        <name>cyanocob(III)alamin</name>
        <dbReference type="ChEBI" id="CHEBI:17439"/>
    </ligand>
</feature>
<dbReference type="EMBL" id="CP000026">
    <property type="protein sequence ID" value="AAV79730.1"/>
    <property type="molecule type" value="Genomic_DNA"/>
</dbReference>
<dbReference type="RefSeq" id="WP_000591403.1">
    <property type="nucleotide sequence ID" value="NC_006511.1"/>
</dbReference>
<dbReference type="SMR" id="Q5PK67"/>
<dbReference type="KEGG" id="spt:SPA3968"/>
<dbReference type="HOGENOM" id="CLU_008287_18_5_6"/>
<dbReference type="Proteomes" id="UP000008185">
    <property type="component" value="Chromosome"/>
</dbReference>
<dbReference type="GO" id="GO:0009279">
    <property type="term" value="C:cell outer membrane"/>
    <property type="evidence" value="ECO:0007669"/>
    <property type="project" value="UniProtKB-SubCell"/>
</dbReference>
<dbReference type="GO" id="GO:0046930">
    <property type="term" value="C:pore complex"/>
    <property type="evidence" value="ECO:0007669"/>
    <property type="project" value="UniProtKB-KW"/>
</dbReference>
<dbReference type="GO" id="GO:0015420">
    <property type="term" value="F:ABC-type vitamin B12 transporter activity"/>
    <property type="evidence" value="ECO:0007669"/>
    <property type="project" value="InterPro"/>
</dbReference>
<dbReference type="GO" id="GO:0046872">
    <property type="term" value="F:metal ion binding"/>
    <property type="evidence" value="ECO:0007669"/>
    <property type="project" value="UniProtKB-KW"/>
</dbReference>
<dbReference type="GO" id="GO:0015288">
    <property type="term" value="F:porin activity"/>
    <property type="evidence" value="ECO:0007669"/>
    <property type="project" value="UniProtKB-KW"/>
</dbReference>
<dbReference type="GO" id="GO:0006811">
    <property type="term" value="P:monoatomic ion transport"/>
    <property type="evidence" value="ECO:0007669"/>
    <property type="project" value="UniProtKB-KW"/>
</dbReference>
<dbReference type="CDD" id="cd01347">
    <property type="entry name" value="ligand_gated_channel"/>
    <property type="match status" value="1"/>
</dbReference>
<dbReference type="FunFam" id="2.170.130.10:FF:000002">
    <property type="entry name" value="Vitamin B12 transporter BtuB"/>
    <property type="match status" value="1"/>
</dbReference>
<dbReference type="FunFam" id="2.40.170.20:FF:000001">
    <property type="entry name" value="Vitamin B12 transporter BtuB"/>
    <property type="match status" value="1"/>
</dbReference>
<dbReference type="Gene3D" id="2.40.170.20">
    <property type="entry name" value="TonB-dependent receptor, beta-barrel domain"/>
    <property type="match status" value="1"/>
</dbReference>
<dbReference type="Gene3D" id="2.170.130.10">
    <property type="entry name" value="TonB-dependent receptor, plug domain"/>
    <property type="match status" value="1"/>
</dbReference>
<dbReference type="HAMAP" id="MF_01531">
    <property type="entry name" value="BtuB"/>
    <property type="match status" value="1"/>
</dbReference>
<dbReference type="InterPro" id="IPR010101">
    <property type="entry name" value="B12_transptr_BtuB"/>
</dbReference>
<dbReference type="InterPro" id="IPR012910">
    <property type="entry name" value="Plug_dom"/>
</dbReference>
<dbReference type="InterPro" id="IPR037066">
    <property type="entry name" value="Plug_dom_sf"/>
</dbReference>
<dbReference type="InterPro" id="IPR039426">
    <property type="entry name" value="TonB-dep_rcpt-like"/>
</dbReference>
<dbReference type="InterPro" id="IPR000531">
    <property type="entry name" value="TonB-dep_rcpt_b-brl"/>
</dbReference>
<dbReference type="InterPro" id="IPR010916">
    <property type="entry name" value="TonB_box_CS"/>
</dbReference>
<dbReference type="InterPro" id="IPR036942">
    <property type="entry name" value="TonB_rcpt_b-brl_sf"/>
</dbReference>
<dbReference type="InterPro" id="IPR010917">
    <property type="entry name" value="TonB_rcpt_CS"/>
</dbReference>
<dbReference type="NCBIfam" id="NF007926">
    <property type="entry name" value="PRK10641.1"/>
    <property type="match status" value="1"/>
</dbReference>
<dbReference type="NCBIfam" id="TIGR01779">
    <property type="entry name" value="TonB-B12"/>
    <property type="match status" value="1"/>
</dbReference>
<dbReference type="PANTHER" id="PTHR30069:SF53">
    <property type="entry name" value="COLICIN I RECEPTOR-RELATED"/>
    <property type="match status" value="1"/>
</dbReference>
<dbReference type="PANTHER" id="PTHR30069">
    <property type="entry name" value="TONB-DEPENDENT OUTER MEMBRANE RECEPTOR"/>
    <property type="match status" value="1"/>
</dbReference>
<dbReference type="Pfam" id="PF07715">
    <property type="entry name" value="Plug"/>
    <property type="match status" value="1"/>
</dbReference>
<dbReference type="Pfam" id="PF00593">
    <property type="entry name" value="TonB_dep_Rec_b-barrel"/>
    <property type="match status" value="1"/>
</dbReference>
<dbReference type="SUPFAM" id="SSF56935">
    <property type="entry name" value="Porins"/>
    <property type="match status" value="1"/>
</dbReference>
<dbReference type="PROSITE" id="PS00430">
    <property type="entry name" value="TONB_DEPENDENT_REC_1"/>
    <property type="match status" value="1"/>
</dbReference>
<dbReference type="PROSITE" id="PS01156">
    <property type="entry name" value="TONB_DEPENDENT_REC_2"/>
    <property type="match status" value="1"/>
</dbReference>
<dbReference type="PROSITE" id="PS52016">
    <property type="entry name" value="TONB_DEPENDENT_REC_3"/>
    <property type="match status" value="1"/>
</dbReference>
<proteinExistence type="inferred from homology"/>